<comment type="function">
    <text>Exhibits unusual shark repellent and surfactant properties. Forms voltage-dependent, ion-permeable channels in membranes. At high concentration causes cell membrane lysis.</text>
</comment>
<comment type="subunit">
    <text>In aqueous solution exists as a tetramer.</text>
</comment>
<comment type="subcellular location">
    <subcellularLocation>
        <location>Secreted</location>
    </subcellularLocation>
    <subcellularLocation>
        <location>Target cell membrane</location>
    </subcellularLocation>
    <text>Forms a helical membrane channel in the prey.</text>
</comment>
<comment type="domain">
    <text>Consists of a C-terminal hydrophilic region and a predominantly hydrophobic remainder.</text>
</comment>
<comment type="similarity">
    <text evidence="1">Belongs to the pardaxin family.</text>
</comment>
<feature type="peptide" id="PRO_0000044784" description="Pardaxin P-3">
    <location>
        <begin position="1"/>
        <end position="33"/>
    </location>
</feature>
<feature type="unsure residue">
    <location>
        <begin position="30"/>
        <end position="31"/>
    </location>
</feature>
<organism>
    <name type="scientific">Pardachirus pavoninus</name>
    <name type="common">Peacock sole</name>
    <name type="synonym">Achirus pavoninus</name>
    <dbReference type="NCBI Taxonomy" id="8286"/>
    <lineage>
        <taxon>Eukaryota</taxon>
        <taxon>Metazoa</taxon>
        <taxon>Chordata</taxon>
        <taxon>Craniata</taxon>
        <taxon>Vertebrata</taxon>
        <taxon>Euteleostomi</taxon>
        <taxon>Actinopterygii</taxon>
        <taxon>Neopterygii</taxon>
        <taxon>Teleostei</taxon>
        <taxon>Neoteleostei</taxon>
        <taxon>Acanthomorphata</taxon>
        <taxon>Carangaria</taxon>
        <taxon>Pleuronectiformes</taxon>
        <taxon>Pleuronectoidei</taxon>
        <taxon>Soleidae</taxon>
        <taxon>Pardachirus</taxon>
    </lineage>
</organism>
<proteinExistence type="evidence at protein level"/>
<sequence>GFFAFIPKIISSPLFKTLLSAVGSALSSSGEQE</sequence>
<name>PAP3_PARPV</name>
<reference key="1">
    <citation type="journal article" date="1986" name="Science">
        <title>Melittin-like peptides from the shark-repelling defense secretion of the sole Pardachirus pavoninus.</title>
        <authorList>
            <person name="Thompson S.A."/>
            <person name="Tachibana K."/>
            <person name="Nakanishi K."/>
            <person name="Kubota I."/>
        </authorList>
    </citation>
    <scope>PROTEIN SEQUENCE</scope>
</reference>
<keyword id="KW-0903">Direct protein sequencing</keyword>
<keyword id="KW-0406">Ion transport</keyword>
<keyword id="KW-0472">Membrane</keyword>
<keyword id="KW-0964">Secreted</keyword>
<keyword id="KW-1052">Target cell membrane</keyword>
<keyword id="KW-1053">Target membrane</keyword>
<keyword id="KW-0800">Toxin</keyword>
<keyword id="KW-0812">Transmembrane</keyword>
<keyword id="KW-0813">Transport</keyword>
<accession>P81866</accession>
<accession>Q7LZJ4</accession>
<dbReference type="PIR" id="C60907">
    <property type="entry name" value="C60907"/>
</dbReference>
<dbReference type="GO" id="GO:0005576">
    <property type="term" value="C:extracellular region"/>
    <property type="evidence" value="ECO:0007669"/>
    <property type="project" value="UniProtKB-SubCell"/>
</dbReference>
<dbReference type="GO" id="GO:0016020">
    <property type="term" value="C:membrane"/>
    <property type="evidence" value="ECO:0007669"/>
    <property type="project" value="UniProtKB-KW"/>
</dbReference>
<dbReference type="GO" id="GO:0044218">
    <property type="term" value="C:other organism cell membrane"/>
    <property type="evidence" value="ECO:0007669"/>
    <property type="project" value="UniProtKB-KW"/>
</dbReference>
<dbReference type="GO" id="GO:0090729">
    <property type="term" value="F:toxin activity"/>
    <property type="evidence" value="ECO:0007669"/>
    <property type="project" value="UniProtKB-KW"/>
</dbReference>
<dbReference type="GO" id="GO:0006811">
    <property type="term" value="P:monoatomic ion transport"/>
    <property type="evidence" value="ECO:0007669"/>
    <property type="project" value="UniProtKB-KW"/>
</dbReference>
<dbReference type="InterPro" id="IPR009990">
    <property type="entry name" value="Pardaxin"/>
</dbReference>
<dbReference type="Pfam" id="PF07425">
    <property type="entry name" value="Pardaxin"/>
    <property type="match status" value="1"/>
</dbReference>
<dbReference type="PIRSF" id="PIRSF037561">
    <property type="entry name" value="Pardaxin"/>
    <property type="match status" value="1"/>
</dbReference>
<evidence type="ECO:0000305" key="1"/>
<protein>
    <recommendedName>
        <fullName>Pardaxin P-3</fullName>
    </recommendedName>
    <alternativeName>
        <fullName>Pardaxin Pa3</fullName>
    </alternativeName>
</protein>